<accession>Q9LNC9</accession>
<accession>Q39153</accession>
<organism>
    <name type="scientific">Arabidopsis thaliana</name>
    <name type="common">Mouse-ear cress</name>
    <dbReference type="NCBI Taxonomy" id="3702"/>
    <lineage>
        <taxon>Eukaryota</taxon>
        <taxon>Viridiplantae</taxon>
        <taxon>Streptophyta</taxon>
        <taxon>Embryophyta</taxon>
        <taxon>Tracheophyta</taxon>
        <taxon>Spermatophyta</taxon>
        <taxon>Magnoliopsida</taxon>
        <taxon>eudicotyledons</taxon>
        <taxon>Gunneridae</taxon>
        <taxon>Pentapetalae</taxon>
        <taxon>rosids</taxon>
        <taxon>malvids</taxon>
        <taxon>Brassicales</taxon>
        <taxon>Brassicaceae</taxon>
        <taxon>Camelineae</taxon>
        <taxon>Arabidopsis</taxon>
    </lineage>
</organism>
<comment type="function">
    <text evidence="2 3">Plays a regulatory role in meristem function. Functions as component of a regulatory network controlling the establishment and/or development of the shoot system by the regulation of apical meristem function (PubMed:9681014). May play a role in tolerance to boric acid (PubMed:16861809).</text>
</comment>
<comment type="interaction">
    <interactant intactId="EBI-25521688">
        <id>Q9LNC9</id>
    </interactant>
    <interactant intactId="EBI-25517907">
        <id>Q9FJ98</id>
        <label>NRPB6A</label>
    </interactant>
    <organismsDiffer>false</organismsDiffer>
    <experiments>3</experiments>
</comment>
<comment type="interaction">
    <interactant intactId="EBI-25521688">
        <id>Q9LNC9</id>
    </interactant>
    <interactant intactId="EBI-4429205">
        <id>Q9SJ96</id>
        <label>NRPB6B</label>
    </interactant>
    <organismsDiffer>false</organismsDiffer>
    <experiments>3</experiments>
</comment>
<comment type="subcellular location">
    <subcellularLocation>
        <location evidence="1">Nucleus</location>
    </subcellularLocation>
</comment>
<comment type="tissue specificity">
    <text evidence="3">Expressed in roots and flowers. Expressed in shoot apex, axillary buds, at the basis of flowers and branching points of inflorescences.</text>
</comment>
<comment type="induction">
    <text evidence="3">Induced by abscisic acid (ABA), drought, light and wounding in leaves. Down-regulated by drought and ABA in roots.</text>
</comment>
<comment type="miscellaneous">
    <text evidence="3">Plants expressing ectopically MYB13 display peculiar hook structure at pedicel branching points, and a reversed order of first flowers and axillary buds.</text>
</comment>
<protein>
    <recommendedName>
        <fullName evidence="5">Transcription factor MYB13</fullName>
    </recommendedName>
    <alternativeName>
        <fullName evidence="8">ATMYBL1</fullName>
    </alternativeName>
    <alternativeName>
        <fullName evidence="4">Myb-related protein 13</fullName>
        <shortName evidence="4">AtMYB13</shortName>
    </alternativeName>
</protein>
<name>MYB13_ARATH</name>
<gene>
    <name evidence="4" type="primary">MYB13</name>
    <name evidence="6" type="ordered locus">At1g06180</name>
    <name evidence="7" type="ORF">F9P14.4</name>
</gene>
<feature type="chain" id="PRO_0000439924" description="Transcription factor MYB13">
    <location>
        <begin position="1"/>
        <end position="246"/>
    </location>
</feature>
<feature type="domain" description="HTH myb-type 1" evidence="1">
    <location>
        <begin position="9"/>
        <end position="61"/>
    </location>
</feature>
<feature type="domain" description="HTH myb-type 2" evidence="1">
    <location>
        <begin position="62"/>
        <end position="116"/>
    </location>
</feature>
<feature type="DNA-binding region" description="H-T-H motif" evidence="1">
    <location>
        <begin position="37"/>
        <end position="61"/>
    </location>
</feature>
<feature type="DNA-binding region" description="H-T-H motif" evidence="1">
    <location>
        <begin position="89"/>
        <end position="112"/>
    </location>
</feature>
<feature type="sequence conflict" description="In Ref. 1; CAA90748." evidence="5" ref="1">
    <original>M</original>
    <variation>T</variation>
    <location>
        <position position="191"/>
    </location>
</feature>
<evidence type="ECO:0000255" key="1">
    <source>
        <dbReference type="PROSITE-ProRule" id="PRU00625"/>
    </source>
</evidence>
<evidence type="ECO:0000269" key="2">
    <source>
    </source>
</evidence>
<evidence type="ECO:0000269" key="3">
    <source>
    </source>
</evidence>
<evidence type="ECO:0000303" key="4">
    <source>
    </source>
</evidence>
<evidence type="ECO:0000305" key="5"/>
<evidence type="ECO:0000312" key="6">
    <source>
        <dbReference type="Araport" id="AT1G06180"/>
    </source>
</evidence>
<evidence type="ECO:0000312" key="7">
    <source>
        <dbReference type="EMBL" id="AAF80215.1"/>
    </source>
</evidence>
<evidence type="ECO:0000312" key="8">
    <source>
        <dbReference type="EMBL" id="CAA90748.1"/>
    </source>
</evidence>
<reference key="1">
    <citation type="journal article" date="1998" name="Plant J.">
        <title>Ectopic expression of a novel MYB gene modifies the architecture of the Arabidopsis inflorescence.</title>
        <authorList>
            <person name="Kirik V."/>
            <person name="Koelle K."/>
            <person name="Wohlfarth T."/>
            <person name="Misera S."/>
            <person name="Baeumlein H."/>
        </authorList>
    </citation>
    <scope>NUCLEOTIDE SEQUENCE [GENOMIC DNA]</scope>
    <scope>FUNCTION</scope>
    <scope>TISSUE SPECIFICITY</scope>
    <scope>INDUCTION</scope>
</reference>
<reference key="2">
    <citation type="submission" date="2004-01" db="EMBL/GenBank/DDBJ databases">
        <title>The MYB transcription factor family in Arabidopsis: a genome-wide cloning and expression pattern analysis.</title>
        <authorList>
            <person name="Qu L."/>
            <person name="Gu H."/>
        </authorList>
    </citation>
    <scope>NUCLEOTIDE SEQUENCE [MRNA]</scope>
</reference>
<reference key="3">
    <citation type="journal article" date="2000" name="Nature">
        <title>Sequence and analysis of chromosome 1 of the plant Arabidopsis thaliana.</title>
        <authorList>
            <person name="Theologis A."/>
            <person name="Ecker J.R."/>
            <person name="Palm C.J."/>
            <person name="Federspiel N.A."/>
            <person name="Kaul S."/>
            <person name="White O."/>
            <person name="Alonso J."/>
            <person name="Altafi H."/>
            <person name="Araujo R."/>
            <person name="Bowman C.L."/>
            <person name="Brooks S.Y."/>
            <person name="Buehler E."/>
            <person name="Chan A."/>
            <person name="Chao Q."/>
            <person name="Chen H."/>
            <person name="Cheuk R.F."/>
            <person name="Chin C.W."/>
            <person name="Chung M.K."/>
            <person name="Conn L."/>
            <person name="Conway A.B."/>
            <person name="Conway A.R."/>
            <person name="Creasy T.H."/>
            <person name="Dewar K."/>
            <person name="Dunn P."/>
            <person name="Etgu P."/>
            <person name="Feldblyum T.V."/>
            <person name="Feng J.-D."/>
            <person name="Fong B."/>
            <person name="Fujii C.Y."/>
            <person name="Gill J.E."/>
            <person name="Goldsmith A.D."/>
            <person name="Haas B."/>
            <person name="Hansen N.F."/>
            <person name="Hughes B."/>
            <person name="Huizar L."/>
            <person name="Hunter J.L."/>
            <person name="Jenkins J."/>
            <person name="Johnson-Hopson C."/>
            <person name="Khan S."/>
            <person name="Khaykin E."/>
            <person name="Kim C.J."/>
            <person name="Koo H.L."/>
            <person name="Kremenetskaia I."/>
            <person name="Kurtz D.B."/>
            <person name="Kwan A."/>
            <person name="Lam B."/>
            <person name="Langin-Hooper S."/>
            <person name="Lee A."/>
            <person name="Lee J.M."/>
            <person name="Lenz C.A."/>
            <person name="Li J.H."/>
            <person name="Li Y.-P."/>
            <person name="Lin X."/>
            <person name="Liu S.X."/>
            <person name="Liu Z.A."/>
            <person name="Luros J.S."/>
            <person name="Maiti R."/>
            <person name="Marziali A."/>
            <person name="Militscher J."/>
            <person name="Miranda M."/>
            <person name="Nguyen M."/>
            <person name="Nierman W.C."/>
            <person name="Osborne B.I."/>
            <person name="Pai G."/>
            <person name="Peterson J."/>
            <person name="Pham P.K."/>
            <person name="Rizzo M."/>
            <person name="Rooney T."/>
            <person name="Rowley D."/>
            <person name="Sakano H."/>
            <person name="Salzberg S.L."/>
            <person name="Schwartz J.R."/>
            <person name="Shinn P."/>
            <person name="Southwick A.M."/>
            <person name="Sun H."/>
            <person name="Tallon L.J."/>
            <person name="Tambunga G."/>
            <person name="Toriumi M.J."/>
            <person name="Town C.D."/>
            <person name="Utterback T."/>
            <person name="Van Aken S."/>
            <person name="Vaysberg M."/>
            <person name="Vysotskaia V.S."/>
            <person name="Walker M."/>
            <person name="Wu D."/>
            <person name="Yu G."/>
            <person name="Fraser C.M."/>
            <person name="Venter J.C."/>
            <person name="Davis R.W."/>
        </authorList>
    </citation>
    <scope>NUCLEOTIDE SEQUENCE [LARGE SCALE GENOMIC DNA]</scope>
    <source>
        <strain>cv. Columbia</strain>
    </source>
</reference>
<reference key="4">
    <citation type="journal article" date="2017" name="Plant J.">
        <title>Araport11: a complete reannotation of the Arabidopsis thaliana reference genome.</title>
        <authorList>
            <person name="Cheng C.Y."/>
            <person name="Krishnakumar V."/>
            <person name="Chan A.P."/>
            <person name="Thibaud-Nissen F."/>
            <person name="Schobel S."/>
            <person name="Town C.D."/>
        </authorList>
    </citation>
    <scope>GENOME REANNOTATION</scope>
    <source>
        <strain>cv. Columbia</strain>
    </source>
</reference>
<reference key="5">
    <citation type="submission" date="2006-04" db="EMBL/GenBank/DDBJ databases">
        <title>Arabidopsis ORF clones.</title>
        <authorList>
            <person name="Shinn P."/>
            <person name="Chen H."/>
            <person name="Kim C.J."/>
            <person name="Ecker J.R."/>
        </authorList>
    </citation>
    <scope>NUCLEOTIDE SEQUENCE [LARGE SCALE MRNA]</scope>
    <source>
        <strain>cv. Columbia</strain>
    </source>
</reference>
<reference key="6">
    <citation type="submission" date="2009-03" db="EMBL/GenBank/DDBJ databases">
        <title>ORF cloning and analysis of Arabidopsis transcription factor genes.</title>
        <authorList>
            <person name="Fujita M."/>
            <person name="Mizukado S."/>
            <person name="Seki M."/>
            <person name="Shinozaki K."/>
            <person name="Mitsuda N."/>
            <person name="Takiguchi Y."/>
            <person name="Takagi M."/>
        </authorList>
    </citation>
    <scope>NUCLEOTIDE SEQUENCE [LARGE SCALE MRNA]</scope>
</reference>
<reference key="7">
    <citation type="journal article" date="2001" name="Curr. Opin. Plant Biol.">
        <title>The R2R3-MYB gene family in Arabidopsis thaliana.</title>
        <authorList>
            <person name="Stracke R."/>
            <person name="Werber M."/>
            <person name="Weisshaar B."/>
        </authorList>
    </citation>
    <scope>GENE FAMILY</scope>
    <scope>NOMENCLATURE</scope>
</reference>
<reference key="8">
    <citation type="journal article" date="2006" name="Biosci. Biotechnol. Biochem.">
        <title>Isolation of Arabidopsis thaliana cDNAs that confer yeast boric acid tolerance.</title>
        <authorList>
            <person name="Nozawa A."/>
            <person name="Miwa K."/>
            <person name="Kobayashi M."/>
            <person name="Fujiwara T."/>
        </authorList>
    </citation>
    <scope>FUNCTION</scope>
</reference>
<proteinExistence type="evidence at protein level"/>
<sequence length="246" mass="27951">MGRRPCCEKIGLKKGPWSAEEDRILINYISLHGHPNWRALPKLAGLLRCGKSCRLRWINYLRPDIKRGNFTPHEEDTIISLHQLLGNRWSAIAAKLPGRTDNEIKNVWHTHLKKRLHHSQDQNNKEDFVSTTAAEMPTSPQQQSSSSADISAITTLGNNNDISNSNKDSATSSEDVLAIIDESFWSEVVLMDCDISGNEKNEKKIENWEGSLDRNDKGYNHDMEFWFDHLTSSSCIIGEMSDISEF</sequence>
<dbReference type="EMBL" id="Z50869">
    <property type="protein sequence ID" value="CAA90748.1"/>
    <property type="molecule type" value="Genomic_DNA"/>
</dbReference>
<dbReference type="EMBL" id="AY519550">
    <property type="protein sequence ID" value="AAS10020.1"/>
    <property type="molecule type" value="mRNA"/>
</dbReference>
<dbReference type="EMBL" id="AC025290">
    <property type="protein sequence ID" value="AAF80215.1"/>
    <property type="molecule type" value="Genomic_DNA"/>
</dbReference>
<dbReference type="EMBL" id="CP002684">
    <property type="protein sequence ID" value="AEE27955.1"/>
    <property type="molecule type" value="Genomic_DNA"/>
</dbReference>
<dbReference type="EMBL" id="BT025173">
    <property type="protein sequence ID" value="ABE77411.1"/>
    <property type="molecule type" value="mRNA"/>
</dbReference>
<dbReference type="EMBL" id="AB493437">
    <property type="protein sequence ID" value="BAH30275.1"/>
    <property type="molecule type" value="mRNA"/>
</dbReference>
<dbReference type="PIR" id="D86197">
    <property type="entry name" value="D86197"/>
</dbReference>
<dbReference type="PIR" id="S71283">
    <property type="entry name" value="S71283"/>
</dbReference>
<dbReference type="RefSeq" id="NP_172108.1">
    <property type="nucleotide sequence ID" value="NM_100499.2"/>
</dbReference>
<dbReference type="SMR" id="Q9LNC9"/>
<dbReference type="IntAct" id="Q9LNC9">
    <property type="interactions" value="3"/>
</dbReference>
<dbReference type="STRING" id="3702.Q9LNC9"/>
<dbReference type="PaxDb" id="3702-AT1G06180.1"/>
<dbReference type="EnsemblPlants" id="AT1G06180.1">
    <property type="protein sequence ID" value="AT1G06180.1"/>
    <property type="gene ID" value="AT1G06180"/>
</dbReference>
<dbReference type="GeneID" id="837127"/>
<dbReference type="Gramene" id="AT1G06180.1">
    <property type="protein sequence ID" value="AT1G06180.1"/>
    <property type="gene ID" value="AT1G06180"/>
</dbReference>
<dbReference type="KEGG" id="ath:AT1G06180"/>
<dbReference type="Araport" id="AT1G06180"/>
<dbReference type="TAIR" id="AT1G06180">
    <property type="gene designation" value="MYB13"/>
</dbReference>
<dbReference type="eggNOG" id="KOG0048">
    <property type="taxonomic scope" value="Eukaryota"/>
</dbReference>
<dbReference type="HOGENOM" id="CLU_028567_6_4_1"/>
<dbReference type="InParanoid" id="Q9LNC9"/>
<dbReference type="OMA" id="WAYIARM"/>
<dbReference type="PhylomeDB" id="Q9LNC9"/>
<dbReference type="PRO" id="PR:Q9LNC9"/>
<dbReference type="Proteomes" id="UP000006548">
    <property type="component" value="Chromosome 1"/>
</dbReference>
<dbReference type="ExpressionAtlas" id="Q9LNC9">
    <property type="expression patterns" value="baseline and differential"/>
</dbReference>
<dbReference type="GO" id="GO:0005634">
    <property type="term" value="C:nucleus"/>
    <property type="evidence" value="ECO:0007669"/>
    <property type="project" value="UniProtKB-SubCell"/>
</dbReference>
<dbReference type="GO" id="GO:0003700">
    <property type="term" value="F:DNA-binding transcription factor activity"/>
    <property type="evidence" value="ECO:0000250"/>
    <property type="project" value="TAIR"/>
</dbReference>
<dbReference type="GO" id="GO:0000976">
    <property type="term" value="F:transcription cis-regulatory region binding"/>
    <property type="evidence" value="ECO:0000353"/>
    <property type="project" value="TAIR"/>
</dbReference>
<dbReference type="GO" id="GO:0009909">
    <property type="term" value="P:regulation of flower development"/>
    <property type="evidence" value="ECO:0000315"/>
    <property type="project" value="UniProtKB"/>
</dbReference>
<dbReference type="CDD" id="cd00167">
    <property type="entry name" value="SANT"/>
    <property type="match status" value="2"/>
</dbReference>
<dbReference type="FunFam" id="1.10.10.60:FF:000001">
    <property type="entry name" value="MYB-related transcription factor"/>
    <property type="match status" value="1"/>
</dbReference>
<dbReference type="FunFam" id="1.10.10.60:FF:000316">
    <property type="entry name" value="Transcription factor MYB15"/>
    <property type="match status" value="1"/>
</dbReference>
<dbReference type="Gene3D" id="1.10.10.60">
    <property type="entry name" value="Homeodomain-like"/>
    <property type="match status" value="2"/>
</dbReference>
<dbReference type="InterPro" id="IPR009057">
    <property type="entry name" value="Homeodomain-like_sf"/>
</dbReference>
<dbReference type="InterPro" id="IPR017930">
    <property type="entry name" value="Myb_dom"/>
</dbReference>
<dbReference type="InterPro" id="IPR015495">
    <property type="entry name" value="Myb_TF_plants"/>
</dbReference>
<dbReference type="InterPro" id="IPR001005">
    <property type="entry name" value="SANT/Myb"/>
</dbReference>
<dbReference type="PANTHER" id="PTHR10641">
    <property type="entry name" value="MYB FAMILY TRANSCRIPTION FACTOR"/>
    <property type="match status" value="1"/>
</dbReference>
<dbReference type="PANTHER" id="PTHR10641:SF1383">
    <property type="entry name" value="TRANSCRIPTION FACTOR MYB13"/>
    <property type="match status" value="1"/>
</dbReference>
<dbReference type="Pfam" id="PF00249">
    <property type="entry name" value="Myb_DNA-binding"/>
    <property type="match status" value="2"/>
</dbReference>
<dbReference type="SMART" id="SM00717">
    <property type="entry name" value="SANT"/>
    <property type="match status" value="2"/>
</dbReference>
<dbReference type="SUPFAM" id="SSF46689">
    <property type="entry name" value="Homeodomain-like"/>
    <property type="match status" value="1"/>
</dbReference>
<dbReference type="PROSITE" id="PS51294">
    <property type="entry name" value="HTH_MYB"/>
    <property type="match status" value="2"/>
</dbReference>
<keyword id="KW-0217">Developmental protein</keyword>
<keyword id="KW-0238">DNA-binding</keyword>
<keyword id="KW-0539">Nucleus</keyword>
<keyword id="KW-1185">Reference proteome</keyword>
<keyword id="KW-0677">Repeat</keyword>
<keyword id="KW-0804">Transcription</keyword>
<keyword id="KW-0805">Transcription regulation</keyword>